<proteinExistence type="inferred from homology"/>
<comment type="function">
    <text evidence="1">Catalyzes the synthesis of GMP from XMP.</text>
</comment>
<comment type="catalytic activity">
    <reaction evidence="1">
        <text>XMP + L-glutamine + ATP + H2O = GMP + L-glutamate + AMP + diphosphate + 2 H(+)</text>
        <dbReference type="Rhea" id="RHEA:11680"/>
        <dbReference type="ChEBI" id="CHEBI:15377"/>
        <dbReference type="ChEBI" id="CHEBI:15378"/>
        <dbReference type="ChEBI" id="CHEBI:29985"/>
        <dbReference type="ChEBI" id="CHEBI:30616"/>
        <dbReference type="ChEBI" id="CHEBI:33019"/>
        <dbReference type="ChEBI" id="CHEBI:57464"/>
        <dbReference type="ChEBI" id="CHEBI:58115"/>
        <dbReference type="ChEBI" id="CHEBI:58359"/>
        <dbReference type="ChEBI" id="CHEBI:456215"/>
        <dbReference type="EC" id="6.3.5.2"/>
    </reaction>
</comment>
<comment type="pathway">
    <text evidence="1">Purine metabolism; GMP biosynthesis; GMP from XMP (L-Gln route): step 1/1.</text>
</comment>
<comment type="subunit">
    <text evidence="1">Homodimer.</text>
</comment>
<name>GUAA_STAES</name>
<gene>
    <name evidence="1" type="primary">guaA</name>
    <name type="ordered locus">SE_2347</name>
</gene>
<protein>
    <recommendedName>
        <fullName evidence="1">GMP synthase [glutamine-hydrolyzing]</fullName>
        <ecNumber evidence="1">6.3.5.2</ecNumber>
    </recommendedName>
    <alternativeName>
        <fullName evidence="1">GMP synthetase</fullName>
    </alternativeName>
    <alternativeName>
        <fullName evidence="1">Glutamine amidotransferase</fullName>
    </alternativeName>
</protein>
<sequence length="513" mass="58185">MEMAKEQELILVLDFGSQYNQLITRRIREMGVYSELHDHEISIEEIKRMNPKGIILSGGPNSVYEEGSFTIDPEIYNLGIPVLGICYGMQLTTKLLGGKVERANEREYGKATINAKSDELFFGLPSEQTVWMSHSDKVIEIPEGFEVIADSPSTNYAAIEDKKRRIYGVQFHPEVRHTEYGNDLLRNFVRRVCNCTGEWTMENFIEIEIEKIRQQVGNRKVLCAMSGGVDSSVVAVLLHKAIGEQLTCIFVDHGLLRKGEGDMVMEQFGEGFDMNIIRVNAQERFMSKLKGVSDPERKRKIIGNEFVYVFDDEAAKLTDVDFLAQGTLYTDVIESGTKTAQTIKSHHNVGGLPEDMEFELIEPINTLFKDEVRALGIELGIPEHLVWRQPFPGPGLGIRVLGEITEDKLEIVRESDAILREVIREEGLERDIWQYFTVLPGIQSVGVMGDYRTYDHTVGIRAVTSIDGMTSDFARIDWEVLQKISSRIVNEVDHVNRVVYDITSKPPSTIEWE</sequence>
<reference key="1">
    <citation type="journal article" date="2003" name="Mol. Microbiol.">
        <title>Genome-based analysis of virulence genes in a non-biofilm-forming Staphylococcus epidermidis strain (ATCC 12228).</title>
        <authorList>
            <person name="Zhang Y.-Q."/>
            <person name="Ren S.-X."/>
            <person name="Li H.-L."/>
            <person name="Wang Y.-X."/>
            <person name="Fu G."/>
            <person name="Yang J."/>
            <person name="Qin Z.-Q."/>
            <person name="Miao Y.-G."/>
            <person name="Wang W.-Y."/>
            <person name="Chen R.-S."/>
            <person name="Shen Y."/>
            <person name="Chen Z."/>
            <person name="Yuan Z.-H."/>
            <person name="Zhao G.-P."/>
            <person name="Qu D."/>
            <person name="Danchin A."/>
            <person name="Wen Y.-M."/>
        </authorList>
    </citation>
    <scope>NUCLEOTIDE SEQUENCE [LARGE SCALE GENOMIC DNA]</scope>
    <source>
        <strain>ATCC 12228 / FDA PCI 1200</strain>
    </source>
</reference>
<keyword id="KW-0067">ATP-binding</keyword>
<keyword id="KW-0315">Glutamine amidotransferase</keyword>
<keyword id="KW-0332">GMP biosynthesis</keyword>
<keyword id="KW-0436">Ligase</keyword>
<keyword id="KW-0547">Nucleotide-binding</keyword>
<keyword id="KW-0658">Purine biosynthesis</keyword>
<dbReference type="EC" id="6.3.5.2" evidence="1"/>
<dbReference type="EMBL" id="AE015929">
    <property type="protein sequence ID" value="AAO05990.1"/>
    <property type="molecule type" value="Genomic_DNA"/>
</dbReference>
<dbReference type="RefSeq" id="NP_765902.1">
    <property type="nucleotide sequence ID" value="NC_004461.1"/>
</dbReference>
<dbReference type="RefSeq" id="WP_001829351.1">
    <property type="nucleotide sequence ID" value="NZ_WBME01000004.1"/>
</dbReference>
<dbReference type="SMR" id="Q8CMQ8"/>
<dbReference type="MEROPS" id="C26.957"/>
<dbReference type="GeneID" id="50019658"/>
<dbReference type="KEGG" id="sep:SE_2347"/>
<dbReference type="PATRIC" id="fig|176280.10.peg.2290"/>
<dbReference type="eggNOG" id="COG0518">
    <property type="taxonomic scope" value="Bacteria"/>
</dbReference>
<dbReference type="eggNOG" id="COG0519">
    <property type="taxonomic scope" value="Bacteria"/>
</dbReference>
<dbReference type="HOGENOM" id="CLU_014340_0_5_9"/>
<dbReference type="OrthoDB" id="9802219at2"/>
<dbReference type="UniPathway" id="UPA00189">
    <property type="reaction ID" value="UER00296"/>
</dbReference>
<dbReference type="Proteomes" id="UP000001411">
    <property type="component" value="Chromosome"/>
</dbReference>
<dbReference type="GO" id="GO:0005829">
    <property type="term" value="C:cytosol"/>
    <property type="evidence" value="ECO:0007669"/>
    <property type="project" value="TreeGrafter"/>
</dbReference>
<dbReference type="GO" id="GO:0005524">
    <property type="term" value="F:ATP binding"/>
    <property type="evidence" value="ECO:0007669"/>
    <property type="project" value="UniProtKB-UniRule"/>
</dbReference>
<dbReference type="GO" id="GO:0003921">
    <property type="term" value="F:GMP synthase activity"/>
    <property type="evidence" value="ECO:0007669"/>
    <property type="project" value="InterPro"/>
</dbReference>
<dbReference type="CDD" id="cd01742">
    <property type="entry name" value="GATase1_GMP_Synthase"/>
    <property type="match status" value="1"/>
</dbReference>
<dbReference type="CDD" id="cd01997">
    <property type="entry name" value="GMP_synthase_C"/>
    <property type="match status" value="1"/>
</dbReference>
<dbReference type="FunFam" id="3.30.300.10:FF:000002">
    <property type="entry name" value="GMP synthase [glutamine-hydrolyzing]"/>
    <property type="match status" value="1"/>
</dbReference>
<dbReference type="FunFam" id="3.40.50.620:FF:000001">
    <property type="entry name" value="GMP synthase [glutamine-hydrolyzing]"/>
    <property type="match status" value="1"/>
</dbReference>
<dbReference type="FunFam" id="3.40.50.880:FF:000001">
    <property type="entry name" value="GMP synthase [glutamine-hydrolyzing]"/>
    <property type="match status" value="1"/>
</dbReference>
<dbReference type="Gene3D" id="3.30.300.10">
    <property type="match status" value="1"/>
</dbReference>
<dbReference type="Gene3D" id="3.40.50.880">
    <property type="match status" value="1"/>
</dbReference>
<dbReference type="Gene3D" id="3.40.50.620">
    <property type="entry name" value="HUPs"/>
    <property type="match status" value="1"/>
</dbReference>
<dbReference type="HAMAP" id="MF_00344">
    <property type="entry name" value="GMP_synthase"/>
    <property type="match status" value="1"/>
</dbReference>
<dbReference type="InterPro" id="IPR029062">
    <property type="entry name" value="Class_I_gatase-like"/>
</dbReference>
<dbReference type="InterPro" id="IPR017926">
    <property type="entry name" value="GATASE"/>
</dbReference>
<dbReference type="InterPro" id="IPR001674">
    <property type="entry name" value="GMP_synth_C"/>
</dbReference>
<dbReference type="InterPro" id="IPR004739">
    <property type="entry name" value="GMP_synth_GATase"/>
</dbReference>
<dbReference type="InterPro" id="IPR022955">
    <property type="entry name" value="GMP_synthase"/>
</dbReference>
<dbReference type="InterPro" id="IPR025777">
    <property type="entry name" value="GMPS_ATP_PPase_dom"/>
</dbReference>
<dbReference type="InterPro" id="IPR014729">
    <property type="entry name" value="Rossmann-like_a/b/a_fold"/>
</dbReference>
<dbReference type="NCBIfam" id="TIGR00884">
    <property type="entry name" value="guaA_Cterm"/>
    <property type="match status" value="1"/>
</dbReference>
<dbReference type="NCBIfam" id="TIGR00888">
    <property type="entry name" value="guaA_Nterm"/>
    <property type="match status" value="1"/>
</dbReference>
<dbReference type="NCBIfam" id="NF000848">
    <property type="entry name" value="PRK00074.1"/>
    <property type="match status" value="1"/>
</dbReference>
<dbReference type="PANTHER" id="PTHR11922:SF2">
    <property type="entry name" value="GMP SYNTHASE [GLUTAMINE-HYDROLYZING]"/>
    <property type="match status" value="1"/>
</dbReference>
<dbReference type="PANTHER" id="PTHR11922">
    <property type="entry name" value="GMP SYNTHASE-RELATED"/>
    <property type="match status" value="1"/>
</dbReference>
<dbReference type="Pfam" id="PF00117">
    <property type="entry name" value="GATase"/>
    <property type="match status" value="1"/>
</dbReference>
<dbReference type="Pfam" id="PF00958">
    <property type="entry name" value="GMP_synt_C"/>
    <property type="match status" value="1"/>
</dbReference>
<dbReference type="Pfam" id="PF03054">
    <property type="entry name" value="tRNA_Me_trans"/>
    <property type="match status" value="1"/>
</dbReference>
<dbReference type="PRINTS" id="PR00097">
    <property type="entry name" value="ANTSNTHASEII"/>
</dbReference>
<dbReference type="PRINTS" id="PR00099">
    <property type="entry name" value="CPSGATASE"/>
</dbReference>
<dbReference type="PRINTS" id="PR00096">
    <property type="entry name" value="GATASE"/>
</dbReference>
<dbReference type="SUPFAM" id="SSF52402">
    <property type="entry name" value="Adenine nucleotide alpha hydrolases-like"/>
    <property type="match status" value="1"/>
</dbReference>
<dbReference type="SUPFAM" id="SSF52317">
    <property type="entry name" value="Class I glutamine amidotransferase-like"/>
    <property type="match status" value="1"/>
</dbReference>
<dbReference type="SUPFAM" id="SSF54810">
    <property type="entry name" value="GMP synthetase C-terminal dimerisation domain"/>
    <property type="match status" value="1"/>
</dbReference>
<dbReference type="PROSITE" id="PS51273">
    <property type="entry name" value="GATASE_TYPE_1"/>
    <property type="match status" value="1"/>
</dbReference>
<dbReference type="PROSITE" id="PS51553">
    <property type="entry name" value="GMPS_ATP_PPASE"/>
    <property type="match status" value="1"/>
</dbReference>
<evidence type="ECO:0000255" key="1">
    <source>
        <dbReference type="HAMAP-Rule" id="MF_00344"/>
    </source>
</evidence>
<feature type="chain" id="PRO_0000140181" description="GMP synthase [glutamine-hydrolyzing]">
    <location>
        <begin position="1"/>
        <end position="513"/>
    </location>
</feature>
<feature type="domain" description="Glutamine amidotransferase type-1" evidence="1">
    <location>
        <begin position="9"/>
        <end position="198"/>
    </location>
</feature>
<feature type="domain" description="GMPS ATP-PPase" evidence="1">
    <location>
        <begin position="199"/>
        <end position="388"/>
    </location>
</feature>
<feature type="active site" description="Nucleophile" evidence="1">
    <location>
        <position position="86"/>
    </location>
</feature>
<feature type="active site" evidence="1">
    <location>
        <position position="172"/>
    </location>
</feature>
<feature type="active site" evidence="1">
    <location>
        <position position="174"/>
    </location>
</feature>
<feature type="binding site" evidence="1">
    <location>
        <begin position="226"/>
        <end position="232"/>
    </location>
    <ligand>
        <name>ATP</name>
        <dbReference type="ChEBI" id="CHEBI:30616"/>
    </ligand>
</feature>
<organism>
    <name type="scientific">Staphylococcus epidermidis (strain ATCC 12228 / FDA PCI 1200)</name>
    <dbReference type="NCBI Taxonomy" id="176280"/>
    <lineage>
        <taxon>Bacteria</taxon>
        <taxon>Bacillati</taxon>
        <taxon>Bacillota</taxon>
        <taxon>Bacilli</taxon>
        <taxon>Bacillales</taxon>
        <taxon>Staphylococcaceae</taxon>
        <taxon>Staphylococcus</taxon>
    </lineage>
</organism>
<accession>Q8CMQ8</accession>